<accession>A8AVE1</accession>
<gene>
    <name evidence="1" type="primary">gatC</name>
    <name type="ordered locus">SGO_0435</name>
</gene>
<protein>
    <recommendedName>
        <fullName evidence="1">Aspartyl/glutamyl-tRNA(Asn/Gln) amidotransferase subunit C</fullName>
        <shortName evidence="1">Asp/Glu-ADT subunit C</shortName>
        <ecNumber evidence="1">6.3.5.-</ecNumber>
    </recommendedName>
</protein>
<name>GATC_STRGC</name>
<feature type="chain" id="PRO_1000076200" description="Aspartyl/glutamyl-tRNA(Asn/Gln) amidotransferase subunit C">
    <location>
        <begin position="1"/>
        <end position="100"/>
    </location>
</feature>
<dbReference type="EC" id="6.3.5.-" evidence="1"/>
<dbReference type="EMBL" id="CP000725">
    <property type="protein sequence ID" value="ABV09236.1"/>
    <property type="molecule type" value="Genomic_DNA"/>
</dbReference>
<dbReference type="RefSeq" id="WP_005591696.1">
    <property type="nucleotide sequence ID" value="NC_009785.1"/>
</dbReference>
<dbReference type="SMR" id="A8AVE1"/>
<dbReference type="STRING" id="467705.SGO_0435"/>
<dbReference type="GeneID" id="93788403"/>
<dbReference type="KEGG" id="sgo:SGO_0435"/>
<dbReference type="eggNOG" id="COG0721">
    <property type="taxonomic scope" value="Bacteria"/>
</dbReference>
<dbReference type="HOGENOM" id="CLU_105899_1_2_9"/>
<dbReference type="Proteomes" id="UP000001131">
    <property type="component" value="Chromosome"/>
</dbReference>
<dbReference type="GO" id="GO:0050566">
    <property type="term" value="F:asparaginyl-tRNA synthase (glutamine-hydrolyzing) activity"/>
    <property type="evidence" value="ECO:0007669"/>
    <property type="project" value="RHEA"/>
</dbReference>
<dbReference type="GO" id="GO:0005524">
    <property type="term" value="F:ATP binding"/>
    <property type="evidence" value="ECO:0007669"/>
    <property type="project" value="UniProtKB-KW"/>
</dbReference>
<dbReference type="GO" id="GO:0050567">
    <property type="term" value="F:glutaminyl-tRNA synthase (glutamine-hydrolyzing) activity"/>
    <property type="evidence" value="ECO:0007669"/>
    <property type="project" value="UniProtKB-UniRule"/>
</dbReference>
<dbReference type="GO" id="GO:0070681">
    <property type="term" value="P:glutaminyl-tRNAGln biosynthesis via transamidation"/>
    <property type="evidence" value="ECO:0007669"/>
    <property type="project" value="TreeGrafter"/>
</dbReference>
<dbReference type="GO" id="GO:0006450">
    <property type="term" value="P:regulation of translational fidelity"/>
    <property type="evidence" value="ECO:0007669"/>
    <property type="project" value="InterPro"/>
</dbReference>
<dbReference type="GO" id="GO:0006412">
    <property type="term" value="P:translation"/>
    <property type="evidence" value="ECO:0007669"/>
    <property type="project" value="UniProtKB-UniRule"/>
</dbReference>
<dbReference type="Gene3D" id="1.10.20.60">
    <property type="entry name" value="Glu-tRNAGln amidotransferase C subunit, N-terminal domain"/>
    <property type="match status" value="1"/>
</dbReference>
<dbReference type="HAMAP" id="MF_00122">
    <property type="entry name" value="GatC"/>
    <property type="match status" value="1"/>
</dbReference>
<dbReference type="InterPro" id="IPR036113">
    <property type="entry name" value="Asp/Glu-ADT_sf_sub_c"/>
</dbReference>
<dbReference type="InterPro" id="IPR003837">
    <property type="entry name" value="GatC"/>
</dbReference>
<dbReference type="NCBIfam" id="TIGR00135">
    <property type="entry name" value="gatC"/>
    <property type="match status" value="1"/>
</dbReference>
<dbReference type="PANTHER" id="PTHR15004">
    <property type="entry name" value="GLUTAMYL-TRNA(GLN) AMIDOTRANSFERASE SUBUNIT C, MITOCHONDRIAL"/>
    <property type="match status" value="1"/>
</dbReference>
<dbReference type="PANTHER" id="PTHR15004:SF0">
    <property type="entry name" value="GLUTAMYL-TRNA(GLN) AMIDOTRANSFERASE SUBUNIT C, MITOCHONDRIAL"/>
    <property type="match status" value="1"/>
</dbReference>
<dbReference type="Pfam" id="PF02686">
    <property type="entry name" value="GatC"/>
    <property type="match status" value="1"/>
</dbReference>
<dbReference type="SUPFAM" id="SSF141000">
    <property type="entry name" value="Glu-tRNAGln amidotransferase C subunit"/>
    <property type="match status" value="1"/>
</dbReference>
<evidence type="ECO:0000255" key="1">
    <source>
        <dbReference type="HAMAP-Rule" id="MF_00122"/>
    </source>
</evidence>
<keyword id="KW-0067">ATP-binding</keyword>
<keyword id="KW-0436">Ligase</keyword>
<keyword id="KW-0547">Nucleotide-binding</keyword>
<keyword id="KW-0648">Protein biosynthesis</keyword>
<keyword id="KW-1185">Reference proteome</keyword>
<proteinExistence type="inferred from homology"/>
<organism>
    <name type="scientific">Streptococcus gordonii (strain Challis / ATCC 35105 / BCRC 15272 / CH1 / DL1 / V288)</name>
    <dbReference type="NCBI Taxonomy" id="467705"/>
    <lineage>
        <taxon>Bacteria</taxon>
        <taxon>Bacillati</taxon>
        <taxon>Bacillota</taxon>
        <taxon>Bacilli</taxon>
        <taxon>Lactobacillales</taxon>
        <taxon>Streptococcaceae</taxon>
        <taxon>Streptococcus</taxon>
    </lineage>
</organism>
<comment type="function">
    <text evidence="1">Allows the formation of correctly charged Asn-tRNA(Asn) or Gln-tRNA(Gln) through the transamidation of misacylated Asp-tRNA(Asn) or Glu-tRNA(Gln) in organisms which lack either or both of asparaginyl-tRNA or glutaminyl-tRNA synthetases. The reaction takes place in the presence of glutamine and ATP through an activated phospho-Asp-tRNA(Asn) or phospho-Glu-tRNA(Gln).</text>
</comment>
<comment type="catalytic activity">
    <reaction evidence="1">
        <text>L-glutamyl-tRNA(Gln) + L-glutamine + ATP + H2O = L-glutaminyl-tRNA(Gln) + L-glutamate + ADP + phosphate + H(+)</text>
        <dbReference type="Rhea" id="RHEA:17521"/>
        <dbReference type="Rhea" id="RHEA-COMP:9681"/>
        <dbReference type="Rhea" id="RHEA-COMP:9684"/>
        <dbReference type="ChEBI" id="CHEBI:15377"/>
        <dbReference type="ChEBI" id="CHEBI:15378"/>
        <dbReference type="ChEBI" id="CHEBI:29985"/>
        <dbReference type="ChEBI" id="CHEBI:30616"/>
        <dbReference type="ChEBI" id="CHEBI:43474"/>
        <dbReference type="ChEBI" id="CHEBI:58359"/>
        <dbReference type="ChEBI" id="CHEBI:78520"/>
        <dbReference type="ChEBI" id="CHEBI:78521"/>
        <dbReference type="ChEBI" id="CHEBI:456216"/>
    </reaction>
</comment>
<comment type="catalytic activity">
    <reaction evidence="1">
        <text>L-aspartyl-tRNA(Asn) + L-glutamine + ATP + H2O = L-asparaginyl-tRNA(Asn) + L-glutamate + ADP + phosphate + 2 H(+)</text>
        <dbReference type="Rhea" id="RHEA:14513"/>
        <dbReference type="Rhea" id="RHEA-COMP:9674"/>
        <dbReference type="Rhea" id="RHEA-COMP:9677"/>
        <dbReference type="ChEBI" id="CHEBI:15377"/>
        <dbReference type="ChEBI" id="CHEBI:15378"/>
        <dbReference type="ChEBI" id="CHEBI:29985"/>
        <dbReference type="ChEBI" id="CHEBI:30616"/>
        <dbReference type="ChEBI" id="CHEBI:43474"/>
        <dbReference type="ChEBI" id="CHEBI:58359"/>
        <dbReference type="ChEBI" id="CHEBI:78515"/>
        <dbReference type="ChEBI" id="CHEBI:78516"/>
        <dbReference type="ChEBI" id="CHEBI:456216"/>
    </reaction>
</comment>
<comment type="subunit">
    <text evidence="1">Heterotrimer of A, B and C subunits.</text>
</comment>
<comment type="similarity">
    <text evidence="1">Belongs to the GatC family.</text>
</comment>
<sequence length="100" mass="11127">MKITQEEVSHVAKLSKLAFSPEETAEFATTLSKIVDMVELLNEVDTEGVPFTSNVAANINYMREDVAQPGWNREELFQNVPEKERGYIKVPAILDDGGDA</sequence>
<reference key="1">
    <citation type="journal article" date="2007" name="J. Bacteriol.">
        <title>Genome-wide transcriptional changes in Streptococcus gordonii in response to competence signaling peptide.</title>
        <authorList>
            <person name="Vickerman M.M."/>
            <person name="Iobst S."/>
            <person name="Jesionowski A.M."/>
            <person name="Gill S.R."/>
        </authorList>
    </citation>
    <scope>NUCLEOTIDE SEQUENCE [LARGE SCALE GENOMIC DNA]</scope>
    <source>
        <strain>Challis / ATCC 35105 / BCRC 15272 / CH1 / DL1 / V288</strain>
    </source>
</reference>